<accession>A4SGG1</accession>
<evidence type="ECO:0000255" key="1">
    <source>
        <dbReference type="HAMAP-Rule" id="MF_00003"/>
    </source>
</evidence>
<sequence length="119" mass="13829">MSRRTEKVASLLQQELGAILEKEYPRGGPLLTVVEVKITADLGLARAFVSIIGNEEERAETMEFLNDETKNIRRILSSKIRHQFRRIPELEFREDLLYEKASRIEELLRSVRKESGENE</sequence>
<reference key="1">
    <citation type="submission" date="2007-03" db="EMBL/GenBank/DDBJ databases">
        <title>Complete sequence of Prosthecochloris vibrioformis DSM 265.</title>
        <authorList>
            <consortium name="US DOE Joint Genome Institute"/>
            <person name="Copeland A."/>
            <person name="Lucas S."/>
            <person name="Lapidus A."/>
            <person name="Barry K."/>
            <person name="Detter J.C."/>
            <person name="Glavina del Rio T."/>
            <person name="Hammon N."/>
            <person name="Israni S."/>
            <person name="Pitluck S."/>
            <person name="Schmutz J."/>
            <person name="Larimer F."/>
            <person name="Land M."/>
            <person name="Hauser L."/>
            <person name="Mikhailova N."/>
            <person name="Li T."/>
            <person name="Overmann J."/>
            <person name="Schuster S.C."/>
            <person name="Bryant D.A."/>
            <person name="Richardson P."/>
        </authorList>
    </citation>
    <scope>NUCLEOTIDE SEQUENCE [LARGE SCALE GENOMIC DNA]</scope>
    <source>
        <strain>DSM 265 / 1930</strain>
    </source>
</reference>
<protein>
    <recommendedName>
        <fullName evidence="1">Ribosome-binding factor A</fullName>
    </recommendedName>
</protein>
<gene>
    <name evidence="1" type="primary">rbfA</name>
    <name type="ordered locus">Cvib_1560</name>
</gene>
<comment type="function">
    <text evidence="1">One of several proteins that assist in the late maturation steps of the functional core of the 30S ribosomal subunit. Associates with free 30S ribosomal subunits (but not with 30S subunits that are part of 70S ribosomes or polysomes). Required for efficient processing of 16S rRNA. May interact with the 5'-terminal helix region of 16S rRNA.</text>
</comment>
<comment type="subunit">
    <text evidence="1">Monomer. Binds 30S ribosomal subunits, but not 50S ribosomal subunits or 70S ribosomes.</text>
</comment>
<comment type="subcellular location">
    <subcellularLocation>
        <location evidence="1">Cytoplasm</location>
    </subcellularLocation>
</comment>
<comment type="similarity">
    <text evidence="1">Belongs to the RbfA family.</text>
</comment>
<feature type="chain" id="PRO_1000073772" description="Ribosome-binding factor A">
    <location>
        <begin position="1"/>
        <end position="119"/>
    </location>
</feature>
<organism>
    <name type="scientific">Chlorobium phaeovibrioides (strain DSM 265 / 1930)</name>
    <name type="common">Prosthecochloris vibrioformis (strain DSM 265)</name>
    <dbReference type="NCBI Taxonomy" id="290318"/>
    <lineage>
        <taxon>Bacteria</taxon>
        <taxon>Pseudomonadati</taxon>
        <taxon>Chlorobiota</taxon>
        <taxon>Chlorobiia</taxon>
        <taxon>Chlorobiales</taxon>
        <taxon>Chlorobiaceae</taxon>
        <taxon>Chlorobium/Pelodictyon group</taxon>
        <taxon>Chlorobium</taxon>
    </lineage>
</organism>
<name>RBFA_CHLPM</name>
<keyword id="KW-0963">Cytoplasm</keyword>
<keyword id="KW-0690">Ribosome biogenesis</keyword>
<proteinExistence type="inferred from homology"/>
<dbReference type="EMBL" id="CP000607">
    <property type="protein sequence ID" value="ABP37570.1"/>
    <property type="molecule type" value="Genomic_DNA"/>
</dbReference>
<dbReference type="SMR" id="A4SGG1"/>
<dbReference type="STRING" id="290318.Cvib_1560"/>
<dbReference type="KEGG" id="pvi:Cvib_1560"/>
<dbReference type="eggNOG" id="COG0858">
    <property type="taxonomic scope" value="Bacteria"/>
</dbReference>
<dbReference type="HOGENOM" id="CLU_089475_4_0_10"/>
<dbReference type="OrthoDB" id="9811910at2"/>
<dbReference type="GO" id="GO:0005829">
    <property type="term" value="C:cytosol"/>
    <property type="evidence" value="ECO:0007669"/>
    <property type="project" value="TreeGrafter"/>
</dbReference>
<dbReference type="GO" id="GO:0043024">
    <property type="term" value="F:ribosomal small subunit binding"/>
    <property type="evidence" value="ECO:0007669"/>
    <property type="project" value="TreeGrafter"/>
</dbReference>
<dbReference type="GO" id="GO:0030490">
    <property type="term" value="P:maturation of SSU-rRNA"/>
    <property type="evidence" value="ECO:0007669"/>
    <property type="project" value="UniProtKB-UniRule"/>
</dbReference>
<dbReference type="Gene3D" id="3.30.300.20">
    <property type="match status" value="1"/>
</dbReference>
<dbReference type="HAMAP" id="MF_00003">
    <property type="entry name" value="RbfA"/>
    <property type="match status" value="1"/>
</dbReference>
<dbReference type="InterPro" id="IPR015946">
    <property type="entry name" value="KH_dom-like_a/b"/>
</dbReference>
<dbReference type="InterPro" id="IPR000238">
    <property type="entry name" value="RbfA"/>
</dbReference>
<dbReference type="InterPro" id="IPR023799">
    <property type="entry name" value="RbfA_dom_sf"/>
</dbReference>
<dbReference type="NCBIfam" id="TIGR00082">
    <property type="entry name" value="rbfA"/>
    <property type="match status" value="1"/>
</dbReference>
<dbReference type="PANTHER" id="PTHR33515">
    <property type="entry name" value="RIBOSOME-BINDING FACTOR A, CHLOROPLASTIC-RELATED"/>
    <property type="match status" value="1"/>
</dbReference>
<dbReference type="PANTHER" id="PTHR33515:SF1">
    <property type="entry name" value="RIBOSOME-BINDING FACTOR A, CHLOROPLASTIC-RELATED"/>
    <property type="match status" value="1"/>
</dbReference>
<dbReference type="Pfam" id="PF02033">
    <property type="entry name" value="RBFA"/>
    <property type="match status" value="1"/>
</dbReference>
<dbReference type="SUPFAM" id="SSF89919">
    <property type="entry name" value="Ribosome-binding factor A, RbfA"/>
    <property type="match status" value="1"/>
</dbReference>